<gene>
    <name type="primary">sodA</name>
    <name type="ordered locus">BH1409</name>
</gene>
<protein>
    <recommendedName>
        <fullName>Superoxide dismutase [Mn]</fullName>
        <ecNumber>1.15.1.1</ecNumber>
    </recommendedName>
</protein>
<organism>
    <name type="scientific">Halalkalibacterium halodurans (strain ATCC BAA-125 / DSM 18197 / FERM 7344 / JCM 9153 / C-125)</name>
    <name type="common">Bacillus halodurans</name>
    <dbReference type="NCBI Taxonomy" id="272558"/>
    <lineage>
        <taxon>Bacteria</taxon>
        <taxon>Bacillati</taxon>
        <taxon>Bacillota</taxon>
        <taxon>Bacilli</taxon>
        <taxon>Bacillales</taxon>
        <taxon>Bacillaceae</taxon>
        <taxon>Halalkalibacterium (ex Joshi et al. 2022)</taxon>
    </lineage>
</organism>
<comment type="function">
    <text>Destroys superoxide anion radicals which are normally produced within the cells and which are toxic to biological systems.</text>
</comment>
<comment type="catalytic activity">
    <reaction>
        <text>2 superoxide + 2 H(+) = H2O2 + O2</text>
        <dbReference type="Rhea" id="RHEA:20696"/>
        <dbReference type="ChEBI" id="CHEBI:15378"/>
        <dbReference type="ChEBI" id="CHEBI:15379"/>
        <dbReference type="ChEBI" id="CHEBI:16240"/>
        <dbReference type="ChEBI" id="CHEBI:18421"/>
        <dbReference type="EC" id="1.15.1.1"/>
    </reaction>
</comment>
<comment type="cofactor">
    <cofactor evidence="1">
        <name>Mn(2+)</name>
        <dbReference type="ChEBI" id="CHEBI:29035"/>
    </cofactor>
    <text evidence="1">Binds 1 Mn(2+) ion per subunit.</text>
</comment>
<comment type="subunit">
    <text evidence="1">Homodimer.</text>
</comment>
<comment type="similarity">
    <text evidence="2">Belongs to the iron/manganese superoxide dismutase family.</text>
</comment>
<name>SODM_HALH5</name>
<reference key="1">
    <citation type="journal article" date="2000" name="Nucleic Acids Res.">
        <title>Complete genome sequence of the alkaliphilic bacterium Bacillus halodurans and genomic sequence comparison with Bacillus subtilis.</title>
        <authorList>
            <person name="Takami H."/>
            <person name="Nakasone K."/>
            <person name="Takaki Y."/>
            <person name="Maeno G."/>
            <person name="Sasaki R."/>
            <person name="Masui N."/>
            <person name="Fuji F."/>
            <person name="Hirama C."/>
            <person name="Nakamura Y."/>
            <person name="Ogasawara N."/>
            <person name="Kuhara S."/>
            <person name="Horikoshi K."/>
        </authorList>
    </citation>
    <scope>NUCLEOTIDE SEQUENCE [LARGE SCALE GENOMIC DNA]</scope>
    <source>
        <strain>ATCC BAA-125 / DSM 18197 / FERM 7344 / JCM 9153 / C-125</strain>
    </source>
</reference>
<feature type="chain" id="PRO_0000160017" description="Superoxide dismutase [Mn]">
    <location>
        <begin position="1"/>
        <end position="202"/>
    </location>
</feature>
<feature type="binding site" evidence="1">
    <location>
        <position position="27"/>
    </location>
    <ligand>
        <name>Mn(2+)</name>
        <dbReference type="ChEBI" id="CHEBI:29035"/>
    </ligand>
</feature>
<feature type="binding site" evidence="1">
    <location>
        <position position="82"/>
    </location>
    <ligand>
        <name>Mn(2+)</name>
        <dbReference type="ChEBI" id="CHEBI:29035"/>
    </ligand>
</feature>
<feature type="binding site" evidence="1">
    <location>
        <position position="164"/>
    </location>
    <ligand>
        <name>Mn(2+)</name>
        <dbReference type="ChEBI" id="CHEBI:29035"/>
    </ligand>
</feature>
<feature type="binding site" evidence="1">
    <location>
        <position position="168"/>
    </location>
    <ligand>
        <name>Mn(2+)</name>
        <dbReference type="ChEBI" id="CHEBI:29035"/>
    </ligand>
</feature>
<feature type="modified residue" description="Phosphothreonine" evidence="1">
    <location>
        <position position="34"/>
    </location>
</feature>
<feature type="modified residue" description="Phosphothreonine" evidence="1">
    <location>
        <position position="70"/>
    </location>
</feature>
<dbReference type="EC" id="1.15.1.1"/>
<dbReference type="EMBL" id="BA000004">
    <property type="protein sequence ID" value="BAB05128.1"/>
    <property type="molecule type" value="Genomic_DNA"/>
</dbReference>
<dbReference type="PIR" id="A83826">
    <property type="entry name" value="A83826"/>
</dbReference>
<dbReference type="RefSeq" id="WP_010897574.1">
    <property type="nucleotide sequence ID" value="NC_002570.2"/>
</dbReference>
<dbReference type="SMR" id="Q9KD10"/>
<dbReference type="STRING" id="272558.gene:10727307"/>
<dbReference type="GeneID" id="87597037"/>
<dbReference type="KEGG" id="bha:BH1409"/>
<dbReference type="eggNOG" id="COG0605">
    <property type="taxonomic scope" value="Bacteria"/>
</dbReference>
<dbReference type="HOGENOM" id="CLU_031625_0_1_9"/>
<dbReference type="OrthoDB" id="9803125at2"/>
<dbReference type="Proteomes" id="UP000001258">
    <property type="component" value="Chromosome"/>
</dbReference>
<dbReference type="GO" id="GO:0005737">
    <property type="term" value="C:cytoplasm"/>
    <property type="evidence" value="ECO:0007669"/>
    <property type="project" value="TreeGrafter"/>
</dbReference>
<dbReference type="GO" id="GO:0046872">
    <property type="term" value="F:metal ion binding"/>
    <property type="evidence" value="ECO:0007669"/>
    <property type="project" value="UniProtKB-KW"/>
</dbReference>
<dbReference type="GO" id="GO:0004784">
    <property type="term" value="F:superoxide dismutase activity"/>
    <property type="evidence" value="ECO:0007669"/>
    <property type="project" value="UniProtKB-EC"/>
</dbReference>
<dbReference type="FunFam" id="1.10.287.990:FF:000001">
    <property type="entry name" value="Superoxide dismutase"/>
    <property type="match status" value="1"/>
</dbReference>
<dbReference type="FunFam" id="3.55.40.20:FF:000001">
    <property type="entry name" value="Superoxide dismutase"/>
    <property type="match status" value="1"/>
</dbReference>
<dbReference type="Gene3D" id="1.10.287.990">
    <property type="entry name" value="Fe,Mn superoxide dismutase (SOD) domain"/>
    <property type="match status" value="1"/>
</dbReference>
<dbReference type="Gene3D" id="3.55.40.20">
    <property type="entry name" value="Iron/manganese superoxide dismutase, C-terminal domain"/>
    <property type="match status" value="1"/>
</dbReference>
<dbReference type="InterPro" id="IPR001189">
    <property type="entry name" value="Mn/Fe_SOD"/>
</dbReference>
<dbReference type="InterPro" id="IPR019833">
    <property type="entry name" value="Mn/Fe_SOD_BS"/>
</dbReference>
<dbReference type="InterPro" id="IPR019832">
    <property type="entry name" value="Mn/Fe_SOD_C"/>
</dbReference>
<dbReference type="InterPro" id="IPR019831">
    <property type="entry name" value="Mn/Fe_SOD_N"/>
</dbReference>
<dbReference type="InterPro" id="IPR036324">
    <property type="entry name" value="Mn/Fe_SOD_N_sf"/>
</dbReference>
<dbReference type="InterPro" id="IPR036314">
    <property type="entry name" value="SOD_C_sf"/>
</dbReference>
<dbReference type="PANTHER" id="PTHR43595">
    <property type="entry name" value="37S RIBOSOMAL PROTEIN S26, MITOCHONDRIAL"/>
    <property type="match status" value="1"/>
</dbReference>
<dbReference type="PANTHER" id="PTHR43595:SF2">
    <property type="entry name" value="SMALL RIBOSOMAL SUBUNIT PROTEIN MS42"/>
    <property type="match status" value="1"/>
</dbReference>
<dbReference type="Pfam" id="PF02777">
    <property type="entry name" value="Sod_Fe_C"/>
    <property type="match status" value="1"/>
</dbReference>
<dbReference type="Pfam" id="PF00081">
    <property type="entry name" value="Sod_Fe_N"/>
    <property type="match status" value="1"/>
</dbReference>
<dbReference type="PIRSF" id="PIRSF000349">
    <property type="entry name" value="SODismutase"/>
    <property type="match status" value="1"/>
</dbReference>
<dbReference type="PRINTS" id="PR01703">
    <property type="entry name" value="MNSODISMTASE"/>
</dbReference>
<dbReference type="SUPFAM" id="SSF54719">
    <property type="entry name" value="Fe,Mn superoxide dismutase (SOD), C-terminal domain"/>
    <property type="match status" value="1"/>
</dbReference>
<dbReference type="SUPFAM" id="SSF46609">
    <property type="entry name" value="Fe,Mn superoxide dismutase (SOD), N-terminal domain"/>
    <property type="match status" value="1"/>
</dbReference>
<dbReference type="PROSITE" id="PS00088">
    <property type="entry name" value="SOD_MN"/>
    <property type="match status" value="1"/>
</dbReference>
<sequence length="202" mass="22413">MAFELPKLPYPANALEPHIDEATMNIHHGKHHNTYVTKLNAALEGHSALAEKSIEALVSDLDAVPENIRTAVRNNGGGHANHTLFWQILSPNGGGAPTGELADAINAEFGSFDQFKEKFADAAANRFGSGWAWLVVNDGKLEITSTPNQDTPLMEGKTPILGLDVWEHAYYLNYQNRRPDYISAFWNVVNWDEVAKRYNEAK</sequence>
<accession>Q9KD10</accession>
<keyword id="KW-0464">Manganese</keyword>
<keyword id="KW-0479">Metal-binding</keyword>
<keyword id="KW-0560">Oxidoreductase</keyword>
<keyword id="KW-0597">Phosphoprotein</keyword>
<keyword id="KW-1185">Reference proteome</keyword>
<evidence type="ECO:0000250" key="1"/>
<evidence type="ECO:0000305" key="2"/>
<proteinExistence type="inferred from homology"/>